<name>SYP_DINSH</name>
<reference key="1">
    <citation type="journal article" date="2010" name="ISME J.">
        <title>The complete genome sequence of the algal symbiont Dinoroseobacter shibae: a hitchhiker's guide to life in the sea.</title>
        <authorList>
            <person name="Wagner-Dobler I."/>
            <person name="Ballhausen B."/>
            <person name="Berger M."/>
            <person name="Brinkhoff T."/>
            <person name="Buchholz I."/>
            <person name="Bunk B."/>
            <person name="Cypionka H."/>
            <person name="Daniel R."/>
            <person name="Drepper T."/>
            <person name="Gerdts G."/>
            <person name="Hahnke S."/>
            <person name="Han C."/>
            <person name="Jahn D."/>
            <person name="Kalhoefer D."/>
            <person name="Kiss H."/>
            <person name="Klenk H.P."/>
            <person name="Kyrpides N."/>
            <person name="Liebl W."/>
            <person name="Liesegang H."/>
            <person name="Meincke L."/>
            <person name="Pati A."/>
            <person name="Petersen J."/>
            <person name="Piekarski T."/>
            <person name="Pommerenke C."/>
            <person name="Pradella S."/>
            <person name="Pukall R."/>
            <person name="Rabus R."/>
            <person name="Stackebrandt E."/>
            <person name="Thole S."/>
            <person name="Thompson L."/>
            <person name="Tielen P."/>
            <person name="Tomasch J."/>
            <person name="von Jan M."/>
            <person name="Wanphrut N."/>
            <person name="Wichels A."/>
            <person name="Zech H."/>
            <person name="Simon M."/>
        </authorList>
    </citation>
    <scope>NUCLEOTIDE SEQUENCE [LARGE SCALE GENOMIC DNA]</scope>
    <source>
        <strain>DSM 16493 / NCIMB 14021 / DFL 12</strain>
    </source>
</reference>
<proteinExistence type="inferred from homology"/>
<keyword id="KW-0030">Aminoacyl-tRNA synthetase</keyword>
<keyword id="KW-0067">ATP-binding</keyword>
<keyword id="KW-0963">Cytoplasm</keyword>
<keyword id="KW-0436">Ligase</keyword>
<keyword id="KW-0547">Nucleotide-binding</keyword>
<keyword id="KW-0648">Protein biosynthesis</keyword>
<keyword id="KW-1185">Reference proteome</keyword>
<sequence length="445" mass="49964">MRLSRYFLPVLKETPAEAQIVSHRLMLRAGMIKQASAGIYSWLPLGYKVLRRIEEIVHEEQQRAGHIPMLMPTLQSADLWRESGRYDDYGQEMLRITDRHGRDMLYGPTNEELITDIFRSNVGSYKDLPLTLYHIQWKFRDEVRPRFGVMRGREFLMKDGYNFDLTKEAALHAYNRHLVSYLRSYERMGLQAIPMRADGGPIGGDYTHEFLVLAETGESEVFYDAEITDLSFGDRQIDYDDVGQCQAVLEEFTSRYARTDETHDPDAFAKVPEARRRSARGIEVGQIFYFGTKYSDAMGATVIDKDQNQVPVHMGSHGIGVSRLLGAIIEASHDDKGIIWPEGVTPFHCGIVNLKQGDAAADAACEGLYDALTKAGLEPLYDDRNERAGGKFATMDLIGLPWRITVGPRGLKAGVVELTSRKTGESEELSPEAAVAKVVARYAGA</sequence>
<comment type="function">
    <text evidence="1">Catalyzes the attachment of proline to tRNA(Pro) in a two-step reaction: proline is first activated by ATP to form Pro-AMP and then transferred to the acceptor end of tRNA(Pro).</text>
</comment>
<comment type="catalytic activity">
    <reaction evidence="1">
        <text>tRNA(Pro) + L-proline + ATP = L-prolyl-tRNA(Pro) + AMP + diphosphate</text>
        <dbReference type="Rhea" id="RHEA:14305"/>
        <dbReference type="Rhea" id="RHEA-COMP:9700"/>
        <dbReference type="Rhea" id="RHEA-COMP:9702"/>
        <dbReference type="ChEBI" id="CHEBI:30616"/>
        <dbReference type="ChEBI" id="CHEBI:33019"/>
        <dbReference type="ChEBI" id="CHEBI:60039"/>
        <dbReference type="ChEBI" id="CHEBI:78442"/>
        <dbReference type="ChEBI" id="CHEBI:78532"/>
        <dbReference type="ChEBI" id="CHEBI:456215"/>
        <dbReference type="EC" id="6.1.1.15"/>
    </reaction>
</comment>
<comment type="subunit">
    <text evidence="1">Homodimer.</text>
</comment>
<comment type="subcellular location">
    <subcellularLocation>
        <location evidence="1">Cytoplasm</location>
    </subcellularLocation>
</comment>
<comment type="similarity">
    <text evidence="1">Belongs to the class-II aminoacyl-tRNA synthetase family. ProS type 2 subfamily.</text>
</comment>
<dbReference type="EC" id="6.1.1.15" evidence="1"/>
<dbReference type="EMBL" id="CP000830">
    <property type="protein sequence ID" value="ABV92489.1"/>
    <property type="molecule type" value="Genomic_DNA"/>
</dbReference>
<dbReference type="RefSeq" id="WP_012177421.1">
    <property type="nucleotide sequence ID" value="NC_009952.1"/>
</dbReference>
<dbReference type="SMR" id="A8LQU6"/>
<dbReference type="STRING" id="398580.Dshi_0744"/>
<dbReference type="KEGG" id="dsh:Dshi_0744"/>
<dbReference type="eggNOG" id="COG0442">
    <property type="taxonomic scope" value="Bacteria"/>
</dbReference>
<dbReference type="HOGENOM" id="CLU_016739_4_2_5"/>
<dbReference type="OrthoDB" id="9809052at2"/>
<dbReference type="Proteomes" id="UP000006833">
    <property type="component" value="Chromosome"/>
</dbReference>
<dbReference type="GO" id="GO:0005829">
    <property type="term" value="C:cytosol"/>
    <property type="evidence" value="ECO:0007669"/>
    <property type="project" value="TreeGrafter"/>
</dbReference>
<dbReference type="GO" id="GO:0005524">
    <property type="term" value="F:ATP binding"/>
    <property type="evidence" value="ECO:0007669"/>
    <property type="project" value="UniProtKB-UniRule"/>
</dbReference>
<dbReference type="GO" id="GO:0004827">
    <property type="term" value="F:proline-tRNA ligase activity"/>
    <property type="evidence" value="ECO:0007669"/>
    <property type="project" value="UniProtKB-UniRule"/>
</dbReference>
<dbReference type="GO" id="GO:0006433">
    <property type="term" value="P:prolyl-tRNA aminoacylation"/>
    <property type="evidence" value="ECO:0007669"/>
    <property type="project" value="UniProtKB-UniRule"/>
</dbReference>
<dbReference type="CDD" id="cd00861">
    <property type="entry name" value="ProRS_anticodon_short"/>
    <property type="match status" value="1"/>
</dbReference>
<dbReference type="CDD" id="cd00779">
    <property type="entry name" value="ProRS_core_prok"/>
    <property type="match status" value="1"/>
</dbReference>
<dbReference type="FunFam" id="3.30.930.10:FF:000042">
    <property type="entry name" value="probable proline--tRNA ligase, mitochondrial"/>
    <property type="match status" value="1"/>
</dbReference>
<dbReference type="FunFam" id="3.40.50.800:FF:000032">
    <property type="entry name" value="Proline--tRNA ligase"/>
    <property type="match status" value="1"/>
</dbReference>
<dbReference type="Gene3D" id="3.40.50.800">
    <property type="entry name" value="Anticodon-binding domain"/>
    <property type="match status" value="1"/>
</dbReference>
<dbReference type="Gene3D" id="3.30.930.10">
    <property type="entry name" value="Bira Bifunctional Protein, Domain 2"/>
    <property type="match status" value="1"/>
</dbReference>
<dbReference type="HAMAP" id="MF_01570">
    <property type="entry name" value="Pro_tRNA_synth_type2"/>
    <property type="match status" value="1"/>
</dbReference>
<dbReference type="InterPro" id="IPR002314">
    <property type="entry name" value="aa-tRNA-synt_IIb"/>
</dbReference>
<dbReference type="InterPro" id="IPR006195">
    <property type="entry name" value="aa-tRNA-synth_II"/>
</dbReference>
<dbReference type="InterPro" id="IPR045864">
    <property type="entry name" value="aa-tRNA-synth_II/BPL/LPL"/>
</dbReference>
<dbReference type="InterPro" id="IPR004154">
    <property type="entry name" value="Anticodon-bd"/>
</dbReference>
<dbReference type="InterPro" id="IPR036621">
    <property type="entry name" value="Anticodon-bd_dom_sf"/>
</dbReference>
<dbReference type="InterPro" id="IPR002316">
    <property type="entry name" value="Pro-tRNA-ligase_IIa"/>
</dbReference>
<dbReference type="InterPro" id="IPR050062">
    <property type="entry name" value="Pro-tRNA_synthetase"/>
</dbReference>
<dbReference type="InterPro" id="IPR023716">
    <property type="entry name" value="Prolyl-tRNA_ligase_IIa_type2"/>
</dbReference>
<dbReference type="InterPro" id="IPR044140">
    <property type="entry name" value="ProRS_anticodon_short"/>
</dbReference>
<dbReference type="InterPro" id="IPR033730">
    <property type="entry name" value="ProRS_core_prok"/>
</dbReference>
<dbReference type="NCBIfam" id="NF008979">
    <property type="entry name" value="PRK12325.1"/>
    <property type="match status" value="1"/>
</dbReference>
<dbReference type="PANTHER" id="PTHR42753">
    <property type="entry name" value="MITOCHONDRIAL RIBOSOME PROTEIN L39/PROLYL-TRNA LIGASE FAMILY MEMBER"/>
    <property type="match status" value="1"/>
</dbReference>
<dbReference type="PANTHER" id="PTHR42753:SF2">
    <property type="entry name" value="PROLINE--TRNA LIGASE"/>
    <property type="match status" value="1"/>
</dbReference>
<dbReference type="Pfam" id="PF03129">
    <property type="entry name" value="HGTP_anticodon"/>
    <property type="match status" value="1"/>
</dbReference>
<dbReference type="Pfam" id="PF00587">
    <property type="entry name" value="tRNA-synt_2b"/>
    <property type="match status" value="1"/>
</dbReference>
<dbReference type="PRINTS" id="PR01046">
    <property type="entry name" value="TRNASYNTHPRO"/>
</dbReference>
<dbReference type="SUPFAM" id="SSF52954">
    <property type="entry name" value="Class II aaRS ABD-related"/>
    <property type="match status" value="1"/>
</dbReference>
<dbReference type="SUPFAM" id="SSF55681">
    <property type="entry name" value="Class II aaRS and biotin synthetases"/>
    <property type="match status" value="1"/>
</dbReference>
<dbReference type="PROSITE" id="PS50862">
    <property type="entry name" value="AA_TRNA_LIGASE_II"/>
    <property type="match status" value="1"/>
</dbReference>
<organism>
    <name type="scientific">Dinoroseobacter shibae (strain DSM 16493 / NCIMB 14021 / DFL 12)</name>
    <dbReference type="NCBI Taxonomy" id="398580"/>
    <lineage>
        <taxon>Bacteria</taxon>
        <taxon>Pseudomonadati</taxon>
        <taxon>Pseudomonadota</taxon>
        <taxon>Alphaproteobacteria</taxon>
        <taxon>Rhodobacterales</taxon>
        <taxon>Roseobacteraceae</taxon>
        <taxon>Dinoroseobacter</taxon>
    </lineage>
</organism>
<protein>
    <recommendedName>
        <fullName evidence="1">Proline--tRNA ligase</fullName>
        <ecNumber evidence="1">6.1.1.15</ecNumber>
    </recommendedName>
    <alternativeName>
        <fullName evidence="1">Prolyl-tRNA synthetase</fullName>
        <shortName evidence="1">ProRS</shortName>
    </alternativeName>
</protein>
<feature type="chain" id="PRO_1000087864" description="Proline--tRNA ligase">
    <location>
        <begin position="1"/>
        <end position="445"/>
    </location>
</feature>
<accession>A8LQU6</accession>
<gene>
    <name evidence="1" type="primary">proS</name>
    <name type="ordered locus">Dshi_0744</name>
</gene>
<evidence type="ECO:0000255" key="1">
    <source>
        <dbReference type="HAMAP-Rule" id="MF_01570"/>
    </source>
</evidence>